<organism>
    <name type="scientific">Bacillus cereus (strain 03BB102)</name>
    <dbReference type="NCBI Taxonomy" id="572264"/>
    <lineage>
        <taxon>Bacteria</taxon>
        <taxon>Bacillati</taxon>
        <taxon>Bacillota</taxon>
        <taxon>Bacilli</taxon>
        <taxon>Bacillales</taxon>
        <taxon>Bacillaceae</taxon>
        <taxon>Bacillus</taxon>
        <taxon>Bacillus cereus group</taxon>
    </lineage>
</organism>
<comment type="function">
    <text evidence="1">Might take part in the signal recognition particle (SRP) pathway. This is inferred from the conservation of its genetic proximity to ftsY/ffh. May be a regulatory protein.</text>
</comment>
<comment type="similarity">
    <text evidence="1">Belongs to the UPF0122 family.</text>
</comment>
<proteinExistence type="inferred from homology"/>
<protein>
    <recommendedName>
        <fullName evidence="1">UPF0122 protein BCA_3946</fullName>
    </recommendedName>
</protein>
<reference key="1">
    <citation type="submission" date="2009-02" db="EMBL/GenBank/DDBJ databases">
        <title>Genome sequence of Bacillus cereus 03BB102.</title>
        <authorList>
            <person name="Dodson R.J."/>
            <person name="Jackson P."/>
            <person name="Munk A.C."/>
            <person name="Brettin T."/>
            <person name="Bruce D."/>
            <person name="Detter C."/>
            <person name="Tapia R."/>
            <person name="Han C."/>
            <person name="Sutton G."/>
            <person name="Sims D."/>
        </authorList>
    </citation>
    <scope>NUCLEOTIDE SEQUENCE [LARGE SCALE GENOMIC DNA]</scope>
    <source>
        <strain>03BB102</strain>
    </source>
</reference>
<dbReference type="EMBL" id="CP001407">
    <property type="protein sequence ID" value="ACO29920.1"/>
    <property type="molecule type" value="Genomic_DNA"/>
</dbReference>
<dbReference type="RefSeq" id="WP_000891061.1">
    <property type="nucleotide sequence ID" value="NZ_CP009318.1"/>
</dbReference>
<dbReference type="SMR" id="C1EP70"/>
<dbReference type="KEGG" id="bcx:BCA_3946"/>
<dbReference type="PATRIC" id="fig|572264.18.peg.3902"/>
<dbReference type="Proteomes" id="UP000002210">
    <property type="component" value="Chromosome"/>
</dbReference>
<dbReference type="Gene3D" id="1.10.10.10">
    <property type="entry name" value="Winged helix-like DNA-binding domain superfamily/Winged helix DNA-binding domain"/>
    <property type="match status" value="1"/>
</dbReference>
<dbReference type="HAMAP" id="MF_00245">
    <property type="entry name" value="UPF0122"/>
    <property type="match status" value="1"/>
</dbReference>
<dbReference type="InterPro" id="IPR013324">
    <property type="entry name" value="RNA_pol_sigma_r3/r4-like"/>
</dbReference>
<dbReference type="InterPro" id="IPR007394">
    <property type="entry name" value="UPF0122"/>
</dbReference>
<dbReference type="InterPro" id="IPR054831">
    <property type="entry name" value="UPF0122_fam_protein"/>
</dbReference>
<dbReference type="InterPro" id="IPR036388">
    <property type="entry name" value="WH-like_DNA-bd_sf"/>
</dbReference>
<dbReference type="NCBIfam" id="NF001068">
    <property type="entry name" value="PRK00118.1-4"/>
    <property type="match status" value="1"/>
</dbReference>
<dbReference type="NCBIfam" id="NF001070">
    <property type="entry name" value="PRK00118.1-6"/>
    <property type="match status" value="1"/>
</dbReference>
<dbReference type="NCBIfam" id="NF045758">
    <property type="entry name" value="YlxM"/>
    <property type="match status" value="1"/>
</dbReference>
<dbReference type="PANTHER" id="PTHR40083">
    <property type="entry name" value="UPF0122 PROTEIN CBO2450/CLC_2298"/>
    <property type="match status" value="1"/>
</dbReference>
<dbReference type="PANTHER" id="PTHR40083:SF1">
    <property type="entry name" value="UPF0122 PROTEIN YLXM"/>
    <property type="match status" value="1"/>
</dbReference>
<dbReference type="Pfam" id="PF04297">
    <property type="entry name" value="UPF0122"/>
    <property type="match status" value="1"/>
</dbReference>
<dbReference type="SUPFAM" id="SSF88659">
    <property type="entry name" value="Sigma3 and sigma4 domains of RNA polymerase sigma factors"/>
    <property type="match status" value="1"/>
</dbReference>
<accession>C1EP70</accession>
<feature type="chain" id="PRO_1000197583" description="UPF0122 protein BCA_3946">
    <location>
        <begin position="1"/>
        <end position="110"/>
    </location>
</feature>
<gene>
    <name type="ordered locus">BCA_3946</name>
</gene>
<sequence length="110" mass="13296">MLEKTTRMNYLFDFYQSLLTQKQRSYMSLYYLDDLSLGEIAEEFDVSRQAVYDNIKRTEAMLEEYEDKLVLLQKFQERQRLVAKLKQLISEEEHVNEEMKQVVEAIEKLD</sequence>
<name>Y3946_BACC3</name>
<evidence type="ECO:0000255" key="1">
    <source>
        <dbReference type="HAMAP-Rule" id="MF_00245"/>
    </source>
</evidence>